<comment type="function">
    <text evidence="1">Catalyzes the conversion of 3-deoxy-D-arabino-heptulosonate 7-phosphate (DAHP) to dehydroquinate (DHQ).</text>
</comment>
<comment type="catalytic activity">
    <reaction evidence="1">
        <text>7-phospho-2-dehydro-3-deoxy-D-arabino-heptonate = 3-dehydroquinate + phosphate</text>
        <dbReference type="Rhea" id="RHEA:21968"/>
        <dbReference type="ChEBI" id="CHEBI:32364"/>
        <dbReference type="ChEBI" id="CHEBI:43474"/>
        <dbReference type="ChEBI" id="CHEBI:58394"/>
        <dbReference type="EC" id="4.2.3.4"/>
    </reaction>
</comment>
<comment type="cofactor">
    <cofactor evidence="1">
        <name>Co(2+)</name>
        <dbReference type="ChEBI" id="CHEBI:48828"/>
    </cofactor>
    <cofactor evidence="1">
        <name>Zn(2+)</name>
        <dbReference type="ChEBI" id="CHEBI:29105"/>
    </cofactor>
    <text evidence="1">Binds 1 divalent metal cation per subunit. Can use either Co(2+) or Zn(2+).</text>
</comment>
<comment type="cofactor">
    <cofactor evidence="1">
        <name>NAD(+)</name>
        <dbReference type="ChEBI" id="CHEBI:57540"/>
    </cofactor>
</comment>
<comment type="pathway">
    <text evidence="1">Metabolic intermediate biosynthesis; chorismate biosynthesis; chorismate from D-erythrose 4-phosphate and phosphoenolpyruvate: step 2/7.</text>
</comment>
<comment type="subcellular location">
    <subcellularLocation>
        <location evidence="1">Cytoplasm</location>
    </subcellularLocation>
</comment>
<comment type="similarity">
    <text evidence="1">Belongs to the sugar phosphate cyclases superfamily. Dehydroquinate synthase family.</text>
</comment>
<dbReference type="EC" id="4.2.3.4" evidence="1"/>
<dbReference type="EMBL" id="AM747720">
    <property type="protein sequence ID" value="CAR50590.1"/>
    <property type="molecule type" value="Genomic_DNA"/>
</dbReference>
<dbReference type="RefSeq" id="WP_006481864.1">
    <property type="nucleotide sequence ID" value="NC_011000.1"/>
</dbReference>
<dbReference type="SMR" id="B4E603"/>
<dbReference type="GeneID" id="56556830"/>
<dbReference type="KEGG" id="bcj:BCAL0280"/>
<dbReference type="eggNOG" id="COG0337">
    <property type="taxonomic scope" value="Bacteria"/>
</dbReference>
<dbReference type="HOGENOM" id="CLU_001201_0_2_4"/>
<dbReference type="BioCyc" id="BCEN216591:G1G1V-323-MONOMER"/>
<dbReference type="UniPathway" id="UPA00053">
    <property type="reaction ID" value="UER00085"/>
</dbReference>
<dbReference type="Proteomes" id="UP000001035">
    <property type="component" value="Chromosome 1"/>
</dbReference>
<dbReference type="GO" id="GO:0005737">
    <property type="term" value="C:cytoplasm"/>
    <property type="evidence" value="ECO:0007669"/>
    <property type="project" value="UniProtKB-SubCell"/>
</dbReference>
<dbReference type="GO" id="GO:0003856">
    <property type="term" value="F:3-dehydroquinate synthase activity"/>
    <property type="evidence" value="ECO:0007669"/>
    <property type="project" value="UniProtKB-UniRule"/>
</dbReference>
<dbReference type="GO" id="GO:0046872">
    <property type="term" value="F:metal ion binding"/>
    <property type="evidence" value="ECO:0007669"/>
    <property type="project" value="UniProtKB-KW"/>
</dbReference>
<dbReference type="GO" id="GO:0000166">
    <property type="term" value="F:nucleotide binding"/>
    <property type="evidence" value="ECO:0007669"/>
    <property type="project" value="UniProtKB-KW"/>
</dbReference>
<dbReference type="GO" id="GO:0008652">
    <property type="term" value="P:amino acid biosynthetic process"/>
    <property type="evidence" value="ECO:0007669"/>
    <property type="project" value="UniProtKB-KW"/>
</dbReference>
<dbReference type="GO" id="GO:0009073">
    <property type="term" value="P:aromatic amino acid family biosynthetic process"/>
    <property type="evidence" value="ECO:0007669"/>
    <property type="project" value="UniProtKB-KW"/>
</dbReference>
<dbReference type="GO" id="GO:0009423">
    <property type="term" value="P:chorismate biosynthetic process"/>
    <property type="evidence" value="ECO:0007669"/>
    <property type="project" value="UniProtKB-UniRule"/>
</dbReference>
<dbReference type="CDD" id="cd08195">
    <property type="entry name" value="DHQS"/>
    <property type="match status" value="1"/>
</dbReference>
<dbReference type="FunFam" id="3.40.50.1970:FF:000001">
    <property type="entry name" value="3-dehydroquinate synthase"/>
    <property type="match status" value="1"/>
</dbReference>
<dbReference type="Gene3D" id="3.40.50.1970">
    <property type="match status" value="1"/>
</dbReference>
<dbReference type="Gene3D" id="1.20.1090.10">
    <property type="entry name" value="Dehydroquinate synthase-like - alpha domain"/>
    <property type="match status" value="1"/>
</dbReference>
<dbReference type="HAMAP" id="MF_00110">
    <property type="entry name" value="DHQ_synthase"/>
    <property type="match status" value="1"/>
</dbReference>
<dbReference type="InterPro" id="IPR050071">
    <property type="entry name" value="Dehydroquinate_synthase"/>
</dbReference>
<dbReference type="InterPro" id="IPR016037">
    <property type="entry name" value="DHQ_synth_AroB"/>
</dbReference>
<dbReference type="InterPro" id="IPR030963">
    <property type="entry name" value="DHQ_synth_fam"/>
</dbReference>
<dbReference type="InterPro" id="IPR030960">
    <property type="entry name" value="DHQS/DOIS_N"/>
</dbReference>
<dbReference type="InterPro" id="IPR056179">
    <property type="entry name" value="DHQS_C"/>
</dbReference>
<dbReference type="NCBIfam" id="TIGR01357">
    <property type="entry name" value="aroB"/>
    <property type="match status" value="1"/>
</dbReference>
<dbReference type="PANTHER" id="PTHR43622">
    <property type="entry name" value="3-DEHYDROQUINATE SYNTHASE"/>
    <property type="match status" value="1"/>
</dbReference>
<dbReference type="PANTHER" id="PTHR43622:SF7">
    <property type="entry name" value="3-DEHYDROQUINATE SYNTHASE, CHLOROPLASTIC"/>
    <property type="match status" value="1"/>
</dbReference>
<dbReference type="Pfam" id="PF01761">
    <property type="entry name" value="DHQ_synthase"/>
    <property type="match status" value="1"/>
</dbReference>
<dbReference type="Pfam" id="PF24621">
    <property type="entry name" value="DHQS_C"/>
    <property type="match status" value="1"/>
</dbReference>
<dbReference type="PIRSF" id="PIRSF001455">
    <property type="entry name" value="DHQ_synth"/>
    <property type="match status" value="1"/>
</dbReference>
<dbReference type="SUPFAM" id="SSF56796">
    <property type="entry name" value="Dehydroquinate synthase-like"/>
    <property type="match status" value="1"/>
</dbReference>
<sequence length="359" mass="37951">MITVNVDLGDRAYPIHIGAGLIGRTELFAPHIKGSSVTIVTNTTVDPLYGDALRAALAPLGKRVSTVVLPDGEAYKNWETLNLIFDGLLTDHADRKTTLVALGGGVVGDMTGFAAACYMRGVPFIQVPTTLLSQVDSSVGGKTGINHPLGKNMIGAFYQPQAVIADIGALTTLPDRELAAGVAEVIKTGAIADAEFFDWIEANVEALNRREPAALAHAVKRSCEIKASVVAADEREGGLRAILNFGHTFGHAIEAGLGYGEWLHGEAVGCGMVMAGDLSVRLGLLDEASRQRLDAVIAAAHLPTRAPALGDARYMDLMRVDKKAEAGAIKFILLKRFGDTLITQAPDEAVFATLAQTTR</sequence>
<organism>
    <name type="scientific">Burkholderia cenocepacia (strain ATCC BAA-245 / DSM 16553 / LMG 16656 / NCTC 13227 / J2315 / CF5610)</name>
    <name type="common">Burkholderia cepacia (strain J2315)</name>
    <dbReference type="NCBI Taxonomy" id="216591"/>
    <lineage>
        <taxon>Bacteria</taxon>
        <taxon>Pseudomonadati</taxon>
        <taxon>Pseudomonadota</taxon>
        <taxon>Betaproteobacteria</taxon>
        <taxon>Burkholderiales</taxon>
        <taxon>Burkholderiaceae</taxon>
        <taxon>Burkholderia</taxon>
        <taxon>Burkholderia cepacia complex</taxon>
    </lineage>
</organism>
<accession>B4E603</accession>
<evidence type="ECO:0000255" key="1">
    <source>
        <dbReference type="HAMAP-Rule" id="MF_00110"/>
    </source>
</evidence>
<keyword id="KW-0028">Amino-acid biosynthesis</keyword>
<keyword id="KW-0057">Aromatic amino acid biosynthesis</keyword>
<keyword id="KW-0170">Cobalt</keyword>
<keyword id="KW-0963">Cytoplasm</keyword>
<keyword id="KW-0456">Lyase</keyword>
<keyword id="KW-0479">Metal-binding</keyword>
<keyword id="KW-0520">NAD</keyword>
<keyword id="KW-0547">Nucleotide-binding</keyword>
<keyword id="KW-0862">Zinc</keyword>
<feature type="chain" id="PRO_1000094472" description="3-dehydroquinate synthase">
    <location>
        <begin position="1"/>
        <end position="359"/>
    </location>
</feature>
<feature type="binding site" evidence="1">
    <location>
        <begin position="71"/>
        <end position="76"/>
    </location>
    <ligand>
        <name>NAD(+)</name>
        <dbReference type="ChEBI" id="CHEBI:57540"/>
    </ligand>
</feature>
<feature type="binding site" evidence="1">
    <location>
        <begin position="105"/>
        <end position="109"/>
    </location>
    <ligand>
        <name>NAD(+)</name>
        <dbReference type="ChEBI" id="CHEBI:57540"/>
    </ligand>
</feature>
<feature type="binding site" evidence="1">
    <location>
        <begin position="129"/>
        <end position="130"/>
    </location>
    <ligand>
        <name>NAD(+)</name>
        <dbReference type="ChEBI" id="CHEBI:57540"/>
    </ligand>
</feature>
<feature type="binding site" evidence="1">
    <location>
        <position position="142"/>
    </location>
    <ligand>
        <name>NAD(+)</name>
        <dbReference type="ChEBI" id="CHEBI:57540"/>
    </ligand>
</feature>
<feature type="binding site" evidence="1">
    <location>
        <position position="151"/>
    </location>
    <ligand>
        <name>NAD(+)</name>
        <dbReference type="ChEBI" id="CHEBI:57540"/>
    </ligand>
</feature>
<feature type="binding site" evidence="1">
    <location>
        <position position="184"/>
    </location>
    <ligand>
        <name>Zn(2+)</name>
        <dbReference type="ChEBI" id="CHEBI:29105"/>
    </ligand>
</feature>
<feature type="binding site" evidence="1">
    <location>
        <position position="247"/>
    </location>
    <ligand>
        <name>Zn(2+)</name>
        <dbReference type="ChEBI" id="CHEBI:29105"/>
    </ligand>
</feature>
<feature type="binding site" evidence="1">
    <location>
        <position position="264"/>
    </location>
    <ligand>
        <name>Zn(2+)</name>
        <dbReference type="ChEBI" id="CHEBI:29105"/>
    </ligand>
</feature>
<name>AROB_BURCJ</name>
<reference key="1">
    <citation type="journal article" date="2009" name="J. Bacteriol.">
        <title>The genome of Burkholderia cenocepacia J2315, an epidemic pathogen of cystic fibrosis patients.</title>
        <authorList>
            <person name="Holden M.T."/>
            <person name="Seth-Smith H.M."/>
            <person name="Crossman L.C."/>
            <person name="Sebaihia M."/>
            <person name="Bentley S.D."/>
            <person name="Cerdeno-Tarraga A.M."/>
            <person name="Thomson N.R."/>
            <person name="Bason N."/>
            <person name="Quail M.A."/>
            <person name="Sharp S."/>
            <person name="Cherevach I."/>
            <person name="Churcher C."/>
            <person name="Goodhead I."/>
            <person name="Hauser H."/>
            <person name="Holroyd N."/>
            <person name="Mungall K."/>
            <person name="Scott P."/>
            <person name="Walker D."/>
            <person name="White B."/>
            <person name="Rose H."/>
            <person name="Iversen P."/>
            <person name="Mil-Homens D."/>
            <person name="Rocha E.P."/>
            <person name="Fialho A.M."/>
            <person name="Baldwin A."/>
            <person name="Dowson C."/>
            <person name="Barrell B.G."/>
            <person name="Govan J.R."/>
            <person name="Vandamme P."/>
            <person name="Hart C.A."/>
            <person name="Mahenthiralingam E."/>
            <person name="Parkhill J."/>
        </authorList>
    </citation>
    <scope>NUCLEOTIDE SEQUENCE [LARGE SCALE GENOMIC DNA]</scope>
    <source>
        <strain>ATCC BAA-245 / DSM 16553 / LMG 16656 / NCTC 13227 / J2315 / CF5610</strain>
    </source>
</reference>
<gene>
    <name evidence="1" type="primary">aroB</name>
    <name type="ordered locus">BceJ2315_02820</name>
    <name type="ORF">BCAL0280</name>
</gene>
<proteinExistence type="inferred from homology"/>
<protein>
    <recommendedName>
        <fullName evidence="1">3-dehydroquinate synthase</fullName>
        <shortName evidence="1">DHQS</shortName>
        <ecNumber evidence="1">4.2.3.4</ecNumber>
    </recommendedName>
</protein>